<accession>A5ISC3</accession>
<gene>
    <name evidence="1" type="primary">rpsP</name>
    <name type="ordered locus">SaurJH9_1297</name>
</gene>
<reference key="1">
    <citation type="submission" date="2007-05" db="EMBL/GenBank/DDBJ databases">
        <title>Complete sequence of chromosome of Staphylococcus aureus subsp. aureus JH9.</title>
        <authorList>
            <consortium name="US DOE Joint Genome Institute"/>
            <person name="Copeland A."/>
            <person name="Lucas S."/>
            <person name="Lapidus A."/>
            <person name="Barry K."/>
            <person name="Detter J.C."/>
            <person name="Glavina del Rio T."/>
            <person name="Hammon N."/>
            <person name="Israni S."/>
            <person name="Pitluck S."/>
            <person name="Chain P."/>
            <person name="Malfatti S."/>
            <person name="Shin M."/>
            <person name="Vergez L."/>
            <person name="Schmutz J."/>
            <person name="Larimer F."/>
            <person name="Land M."/>
            <person name="Hauser L."/>
            <person name="Kyrpides N."/>
            <person name="Kim E."/>
            <person name="Tomasz A."/>
            <person name="Richardson P."/>
        </authorList>
    </citation>
    <scope>NUCLEOTIDE SEQUENCE [LARGE SCALE GENOMIC DNA]</scope>
    <source>
        <strain>JH9</strain>
    </source>
</reference>
<comment type="similarity">
    <text evidence="1">Belongs to the bacterial ribosomal protein bS16 family.</text>
</comment>
<name>RS16_STAA9</name>
<protein>
    <recommendedName>
        <fullName evidence="1">Small ribosomal subunit protein bS16</fullName>
    </recommendedName>
    <alternativeName>
        <fullName evidence="2">30S ribosomal protein S16</fullName>
    </alternativeName>
</protein>
<proteinExistence type="inferred from homology"/>
<evidence type="ECO:0000255" key="1">
    <source>
        <dbReference type="HAMAP-Rule" id="MF_00385"/>
    </source>
</evidence>
<evidence type="ECO:0000305" key="2"/>
<sequence length="91" mass="10235">MAVKIRLTRLGSKRNPFYRIVVADARSPRDGRIIEQIGTYNPTSANAPEIKVDEALALKWLNDGAKPTDTVHNILSKEGIMKKFDEQKKAK</sequence>
<keyword id="KW-0687">Ribonucleoprotein</keyword>
<keyword id="KW-0689">Ribosomal protein</keyword>
<organism>
    <name type="scientific">Staphylococcus aureus (strain JH9)</name>
    <dbReference type="NCBI Taxonomy" id="359786"/>
    <lineage>
        <taxon>Bacteria</taxon>
        <taxon>Bacillati</taxon>
        <taxon>Bacillota</taxon>
        <taxon>Bacilli</taxon>
        <taxon>Bacillales</taxon>
        <taxon>Staphylococcaceae</taxon>
        <taxon>Staphylococcus</taxon>
    </lineage>
</organism>
<feature type="chain" id="PRO_1000080175" description="Small ribosomal subunit protein bS16">
    <location>
        <begin position="1"/>
        <end position="91"/>
    </location>
</feature>
<dbReference type="EMBL" id="CP000703">
    <property type="protein sequence ID" value="ABQ49096.1"/>
    <property type="molecule type" value="Genomic_DNA"/>
</dbReference>
<dbReference type="RefSeq" id="WP_000268754.1">
    <property type="nucleotide sequence ID" value="NC_009487.1"/>
</dbReference>
<dbReference type="SMR" id="A5ISC3"/>
<dbReference type="GeneID" id="66839430"/>
<dbReference type="KEGG" id="saj:SaurJH9_1297"/>
<dbReference type="HOGENOM" id="CLU_100590_5_0_9"/>
<dbReference type="GO" id="GO:0005737">
    <property type="term" value="C:cytoplasm"/>
    <property type="evidence" value="ECO:0007669"/>
    <property type="project" value="UniProtKB-ARBA"/>
</dbReference>
<dbReference type="GO" id="GO:0015935">
    <property type="term" value="C:small ribosomal subunit"/>
    <property type="evidence" value="ECO:0007669"/>
    <property type="project" value="TreeGrafter"/>
</dbReference>
<dbReference type="GO" id="GO:0003735">
    <property type="term" value="F:structural constituent of ribosome"/>
    <property type="evidence" value="ECO:0007669"/>
    <property type="project" value="InterPro"/>
</dbReference>
<dbReference type="GO" id="GO:0006412">
    <property type="term" value="P:translation"/>
    <property type="evidence" value="ECO:0007669"/>
    <property type="project" value="UniProtKB-UniRule"/>
</dbReference>
<dbReference type="FunFam" id="3.30.1320.10:FF:000002">
    <property type="entry name" value="30S ribosomal protein S16"/>
    <property type="match status" value="1"/>
</dbReference>
<dbReference type="Gene3D" id="3.30.1320.10">
    <property type="match status" value="1"/>
</dbReference>
<dbReference type="HAMAP" id="MF_00385">
    <property type="entry name" value="Ribosomal_bS16"/>
    <property type="match status" value="1"/>
</dbReference>
<dbReference type="InterPro" id="IPR000307">
    <property type="entry name" value="Ribosomal_bS16"/>
</dbReference>
<dbReference type="InterPro" id="IPR023803">
    <property type="entry name" value="Ribosomal_bS16_dom_sf"/>
</dbReference>
<dbReference type="NCBIfam" id="TIGR00002">
    <property type="entry name" value="S16"/>
    <property type="match status" value="1"/>
</dbReference>
<dbReference type="PANTHER" id="PTHR12919">
    <property type="entry name" value="30S RIBOSOMAL PROTEIN S16"/>
    <property type="match status" value="1"/>
</dbReference>
<dbReference type="PANTHER" id="PTHR12919:SF20">
    <property type="entry name" value="SMALL RIBOSOMAL SUBUNIT PROTEIN BS16M"/>
    <property type="match status" value="1"/>
</dbReference>
<dbReference type="Pfam" id="PF00886">
    <property type="entry name" value="Ribosomal_S16"/>
    <property type="match status" value="1"/>
</dbReference>
<dbReference type="SUPFAM" id="SSF54565">
    <property type="entry name" value="Ribosomal protein S16"/>
    <property type="match status" value="1"/>
</dbReference>